<sequence length="423" mass="47615">MDNHNSSHQLYKKAMALVLAGGRGSRLYNLTDTRAKPAVYFGGKFRIIDFALSNCLNSGIRRIGVVTQYKSHSLLRHLQRGWGFLRGELNEFIDLLPAQQRVDEEHWYRGTADAVYQNIDILRSYGPEYVIVLAGDHIYKMDYSIMLRDHAQSGYKCTVGCVEIAKEEAYAFGIMGIDENRKITSFIEKPKKNAPTIPGTTDRCYASMGIYIFNSDYLYDLLEEDITNKESSHDFGKDIIPRVVSENQALAHPFSMSCVPRCEGIEPYWRDVGTIDAFWEANLDLAANMPELNIYDKDWPVWTAQEQLPPVKFVPDRNGNHGVITNTLASGGCIVLGSEISKSLMFSKVRVLAGCKIDQCVIMPEVVVGENCRLKKVVIDKGCDIPAGMVIGEDPIEDAKNFYRTDKGVVLVTKKMIDELKEK</sequence>
<reference key="1">
    <citation type="journal article" date="2007" name="PLoS ONE">
        <title>Complete genomic characterization of a pathogenic A.II strain of Francisella tularensis subspecies tularensis.</title>
        <authorList>
            <person name="Beckstrom-Sternberg S.M."/>
            <person name="Auerbach R.K."/>
            <person name="Godbole S."/>
            <person name="Pearson J.V."/>
            <person name="Beckstrom-Sternberg J.S."/>
            <person name="Deng Z."/>
            <person name="Munk C."/>
            <person name="Kubota K."/>
            <person name="Zhou Y."/>
            <person name="Bruce D."/>
            <person name="Noronha J."/>
            <person name="Scheuermann R.H."/>
            <person name="Wang A."/>
            <person name="Wei X."/>
            <person name="Wang J."/>
            <person name="Hao J."/>
            <person name="Wagner D.M."/>
            <person name="Brettin T.S."/>
            <person name="Brown N."/>
            <person name="Gilna P."/>
            <person name="Keim P.S."/>
        </authorList>
    </citation>
    <scope>NUCLEOTIDE SEQUENCE [LARGE SCALE GENOMIC DNA]</scope>
    <source>
        <strain>WY96-3418</strain>
    </source>
</reference>
<evidence type="ECO:0000255" key="1">
    <source>
        <dbReference type="HAMAP-Rule" id="MF_00624"/>
    </source>
</evidence>
<name>GLGC_FRATW</name>
<gene>
    <name evidence="1" type="primary">glgC</name>
    <name type="ordered locus">FTW_1658</name>
</gene>
<comment type="function">
    <text evidence="1">Involved in the biosynthesis of ADP-glucose, a building block required for the elongation reactions to produce glycogen. Catalyzes the reaction between ATP and alpha-D-glucose 1-phosphate (G1P) to produce pyrophosphate and ADP-Glc.</text>
</comment>
<comment type="catalytic activity">
    <reaction evidence="1">
        <text>alpha-D-glucose 1-phosphate + ATP + H(+) = ADP-alpha-D-glucose + diphosphate</text>
        <dbReference type="Rhea" id="RHEA:12120"/>
        <dbReference type="ChEBI" id="CHEBI:15378"/>
        <dbReference type="ChEBI" id="CHEBI:30616"/>
        <dbReference type="ChEBI" id="CHEBI:33019"/>
        <dbReference type="ChEBI" id="CHEBI:57498"/>
        <dbReference type="ChEBI" id="CHEBI:58601"/>
        <dbReference type="EC" id="2.7.7.27"/>
    </reaction>
</comment>
<comment type="pathway">
    <text evidence="1">Glycan biosynthesis; glycogen biosynthesis.</text>
</comment>
<comment type="subunit">
    <text evidence="1">Homotetramer.</text>
</comment>
<comment type="similarity">
    <text evidence="1">Belongs to the bacterial/plant glucose-1-phosphate adenylyltransferase family.</text>
</comment>
<proteinExistence type="inferred from homology"/>
<protein>
    <recommendedName>
        <fullName evidence="1">Glucose-1-phosphate adenylyltransferase</fullName>
        <ecNumber evidence="1">2.7.7.27</ecNumber>
    </recommendedName>
    <alternativeName>
        <fullName evidence="1">ADP-glucose pyrophosphorylase</fullName>
        <shortName evidence="1">ADPGlc PPase</shortName>
    </alternativeName>
    <alternativeName>
        <fullName evidence="1">ADP-glucose synthase</fullName>
    </alternativeName>
</protein>
<keyword id="KW-0067">ATP-binding</keyword>
<keyword id="KW-0119">Carbohydrate metabolism</keyword>
<keyword id="KW-0320">Glycogen biosynthesis</keyword>
<keyword id="KW-0321">Glycogen metabolism</keyword>
<keyword id="KW-0547">Nucleotide-binding</keyword>
<keyword id="KW-0548">Nucleotidyltransferase</keyword>
<keyword id="KW-0808">Transferase</keyword>
<feature type="chain" id="PRO_1000051568" description="Glucose-1-phosphate adenylyltransferase">
    <location>
        <begin position="1"/>
        <end position="423"/>
    </location>
</feature>
<feature type="binding site" evidence="1">
    <location>
        <position position="108"/>
    </location>
    <ligand>
        <name>alpha-D-glucose 1-phosphate</name>
        <dbReference type="ChEBI" id="CHEBI:58601"/>
    </ligand>
</feature>
<feature type="binding site" evidence="1">
    <location>
        <position position="173"/>
    </location>
    <ligand>
        <name>alpha-D-glucose 1-phosphate</name>
        <dbReference type="ChEBI" id="CHEBI:58601"/>
    </ligand>
</feature>
<feature type="binding site" evidence="1">
    <location>
        <begin position="188"/>
        <end position="189"/>
    </location>
    <ligand>
        <name>alpha-D-glucose 1-phosphate</name>
        <dbReference type="ChEBI" id="CHEBI:58601"/>
    </ligand>
</feature>
<feature type="binding site" evidence="1">
    <location>
        <position position="207"/>
    </location>
    <ligand>
        <name>alpha-D-glucose 1-phosphate</name>
        <dbReference type="ChEBI" id="CHEBI:58601"/>
    </ligand>
</feature>
<accession>A4IZK0</accession>
<organism>
    <name type="scientific">Francisella tularensis subsp. tularensis (strain WY96-3418)</name>
    <dbReference type="NCBI Taxonomy" id="418136"/>
    <lineage>
        <taxon>Bacteria</taxon>
        <taxon>Pseudomonadati</taxon>
        <taxon>Pseudomonadota</taxon>
        <taxon>Gammaproteobacteria</taxon>
        <taxon>Thiotrichales</taxon>
        <taxon>Francisellaceae</taxon>
        <taxon>Francisella</taxon>
    </lineage>
</organism>
<dbReference type="EC" id="2.7.7.27" evidence="1"/>
<dbReference type="EMBL" id="CP000608">
    <property type="protein sequence ID" value="ABO47350.1"/>
    <property type="molecule type" value="Genomic_DNA"/>
</dbReference>
<dbReference type="RefSeq" id="WP_003027051.1">
    <property type="nucleotide sequence ID" value="NC_009257.1"/>
</dbReference>
<dbReference type="SMR" id="A4IZK0"/>
<dbReference type="KEGG" id="ftw:FTW_1658"/>
<dbReference type="HOGENOM" id="CLU_029499_14_1_6"/>
<dbReference type="UniPathway" id="UPA00164"/>
<dbReference type="GO" id="GO:0005524">
    <property type="term" value="F:ATP binding"/>
    <property type="evidence" value="ECO:0007669"/>
    <property type="project" value="UniProtKB-KW"/>
</dbReference>
<dbReference type="GO" id="GO:0008878">
    <property type="term" value="F:glucose-1-phosphate adenylyltransferase activity"/>
    <property type="evidence" value="ECO:0007669"/>
    <property type="project" value="UniProtKB-UniRule"/>
</dbReference>
<dbReference type="GO" id="GO:0005978">
    <property type="term" value="P:glycogen biosynthetic process"/>
    <property type="evidence" value="ECO:0007669"/>
    <property type="project" value="UniProtKB-UniRule"/>
</dbReference>
<dbReference type="CDD" id="cd02508">
    <property type="entry name" value="ADP_Glucose_PP"/>
    <property type="match status" value="1"/>
</dbReference>
<dbReference type="CDD" id="cd04651">
    <property type="entry name" value="LbH_G1P_AT_C"/>
    <property type="match status" value="1"/>
</dbReference>
<dbReference type="Gene3D" id="2.160.10.10">
    <property type="entry name" value="Hexapeptide repeat proteins"/>
    <property type="match status" value="1"/>
</dbReference>
<dbReference type="Gene3D" id="3.90.550.10">
    <property type="entry name" value="Spore Coat Polysaccharide Biosynthesis Protein SpsA, Chain A"/>
    <property type="match status" value="1"/>
</dbReference>
<dbReference type="HAMAP" id="MF_00624">
    <property type="entry name" value="GlgC"/>
    <property type="match status" value="1"/>
</dbReference>
<dbReference type="InterPro" id="IPR011831">
    <property type="entry name" value="ADP-Glc_PPase"/>
</dbReference>
<dbReference type="InterPro" id="IPR005836">
    <property type="entry name" value="ADP_Glu_pyroP_CS"/>
</dbReference>
<dbReference type="InterPro" id="IPR023049">
    <property type="entry name" value="GlgC_bac"/>
</dbReference>
<dbReference type="InterPro" id="IPR056818">
    <property type="entry name" value="GlmU/GlgC-like_hexapep"/>
</dbReference>
<dbReference type="InterPro" id="IPR005835">
    <property type="entry name" value="NTP_transferase_dom"/>
</dbReference>
<dbReference type="InterPro" id="IPR029044">
    <property type="entry name" value="Nucleotide-diphossugar_trans"/>
</dbReference>
<dbReference type="InterPro" id="IPR011004">
    <property type="entry name" value="Trimer_LpxA-like_sf"/>
</dbReference>
<dbReference type="NCBIfam" id="TIGR02091">
    <property type="entry name" value="glgC"/>
    <property type="match status" value="1"/>
</dbReference>
<dbReference type="NCBIfam" id="NF001947">
    <property type="entry name" value="PRK00725.1"/>
    <property type="match status" value="1"/>
</dbReference>
<dbReference type="NCBIfam" id="NF002023">
    <property type="entry name" value="PRK00844.1"/>
    <property type="match status" value="1"/>
</dbReference>
<dbReference type="PANTHER" id="PTHR43523:SF2">
    <property type="entry name" value="GLUCOSE-1-PHOSPHATE ADENYLYLTRANSFERASE"/>
    <property type="match status" value="1"/>
</dbReference>
<dbReference type="PANTHER" id="PTHR43523">
    <property type="entry name" value="GLUCOSE-1-PHOSPHATE ADENYLYLTRANSFERASE-RELATED"/>
    <property type="match status" value="1"/>
</dbReference>
<dbReference type="Pfam" id="PF24894">
    <property type="entry name" value="Hexapep_GlmU"/>
    <property type="match status" value="1"/>
</dbReference>
<dbReference type="Pfam" id="PF00483">
    <property type="entry name" value="NTP_transferase"/>
    <property type="match status" value="1"/>
</dbReference>
<dbReference type="SUPFAM" id="SSF53448">
    <property type="entry name" value="Nucleotide-diphospho-sugar transferases"/>
    <property type="match status" value="1"/>
</dbReference>
<dbReference type="SUPFAM" id="SSF51161">
    <property type="entry name" value="Trimeric LpxA-like enzymes"/>
    <property type="match status" value="1"/>
</dbReference>
<dbReference type="PROSITE" id="PS00808">
    <property type="entry name" value="ADP_GLC_PYROPHOSPH_1"/>
    <property type="match status" value="1"/>
</dbReference>
<dbReference type="PROSITE" id="PS00809">
    <property type="entry name" value="ADP_GLC_PYROPHOSPH_2"/>
    <property type="match status" value="1"/>
</dbReference>
<dbReference type="PROSITE" id="PS00810">
    <property type="entry name" value="ADP_GLC_PYROPHOSPH_3"/>
    <property type="match status" value="1"/>
</dbReference>